<sequence length="904" mass="103100">MNMIQNILRVILGSKFERDLKKLVPIVGQINSLEKEMKETSDSLLSSQTQKFRERIARGESLDSILPEAFATVREVSLRTMGMRHFDVQMMGGIALHRGNIAEMKTGEGKTLTSTLAVYLNSLAGKGVHVVTVNDYLAKRDANWMKPIYDFLGISVGVIQHDMDHEQRKIAYSADITYGTNNEFGFDYLRDNMVSHKDHKVQRSHFFAIVDEVDSILIDEARTPLIISGSSDETTDKYVRINKIIPKLVAIEDFEVDEKARNVLLSEKGVSHVEEILGIENLYAPENVDLVHHVHQALKAHKIFQKDVDYVVQNGEVIIVDEFTGRLMAGRRYSDGLHQALEAKESVTIAKESQTLASITFQNYFRMYDKLAGMTGTADTEAEEFRKIYDLDVIVIPPNVSVRRKDSPDRVYRTEKEKFDAILAEIRELQSKKQPVLVGTISIEKSEILSKMLSSAGIQHNVLNAKFHEREAEIVANAGKPGAVTIATNMAGRGTDIVLGGAQLYKENLETWKDDDDLVRRFKESILKQELDNAELLIREMDSSVKQKRASEILESVKIWKKNHEDVLVAGGLHILGTERHEARRIDNQLRGRSGRQGDPGSSRFYLSLQDDLMRIFGSDRISGLMKWANMPEGQEIESKMVSNAIARAQKRVEGHNFDIRKHLLEYDDVMNRQRIVIYKMRNEVLENEDISSLILSFIEEAVENQIVAHCEGNNPSSWNLDSLKEWLEGLELNLEINEEDFKKTKNPQLALFEKVNAAAKQKYEDRAESIGKDIWKLLERNIFLDILDHRWKEHLYSMDHLREGIWTVGYSERNPLVEYKLQGFRMFDVAIENLKNEVVNFLFRVEVSENSKLPEERREYKKVGQEVTGGFQELSSGTPSPTVTVTTSSGGGTERKTSRRRKR</sequence>
<organism>
    <name type="scientific">Leptospira borgpetersenii serovar Hardjo-bovis (strain JB197)</name>
    <dbReference type="NCBI Taxonomy" id="355277"/>
    <lineage>
        <taxon>Bacteria</taxon>
        <taxon>Pseudomonadati</taxon>
        <taxon>Spirochaetota</taxon>
        <taxon>Spirochaetia</taxon>
        <taxon>Leptospirales</taxon>
        <taxon>Leptospiraceae</taxon>
        <taxon>Leptospira</taxon>
    </lineage>
</organism>
<gene>
    <name evidence="1" type="primary">secA</name>
    <name type="ordered locus">LBJ_1552</name>
</gene>
<name>SECA_LEPBJ</name>
<feature type="chain" id="PRO_1000073487" description="Protein translocase subunit SecA">
    <location>
        <begin position="1"/>
        <end position="904"/>
    </location>
</feature>
<feature type="region of interest" description="Disordered" evidence="2">
    <location>
        <begin position="870"/>
        <end position="904"/>
    </location>
</feature>
<feature type="compositionally biased region" description="Low complexity" evidence="2">
    <location>
        <begin position="876"/>
        <end position="889"/>
    </location>
</feature>
<feature type="binding site" evidence="1">
    <location>
        <position position="89"/>
    </location>
    <ligand>
        <name>ATP</name>
        <dbReference type="ChEBI" id="CHEBI:30616"/>
    </ligand>
</feature>
<feature type="binding site" evidence="1">
    <location>
        <begin position="107"/>
        <end position="111"/>
    </location>
    <ligand>
        <name>ATP</name>
        <dbReference type="ChEBI" id="CHEBI:30616"/>
    </ligand>
</feature>
<feature type="binding site" evidence="1">
    <location>
        <position position="496"/>
    </location>
    <ligand>
        <name>ATP</name>
        <dbReference type="ChEBI" id="CHEBI:30616"/>
    </ligand>
</feature>
<protein>
    <recommendedName>
        <fullName evidence="1">Protein translocase subunit SecA</fullName>
        <ecNumber evidence="1">7.4.2.8</ecNumber>
    </recommendedName>
</protein>
<proteinExistence type="inferred from homology"/>
<evidence type="ECO:0000255" key="1">
    <source>
        <dbReference type="HAMAP-Rule" id="MF_01382"/>
    </source>
</evidence>
<evidence type="ECO:0000256" key="2">
    <source>
        <dbReference type="SAM" id="MobiDB-lite"/>
    </source>
</evidence>
<accession>Q04SJ8</accession>
<reference key="1">
    <citation type="journal article" date="2006" name="Proc. Natl. Acad. Sci. U.S.A.">
        <title>Genome reduction in Leptospira borgpetersenii reflects limited transmission potential.</title>
        <authorList>
            <person name="Bulach D.M."/>
            <person name="Zuerner R.L."/>
            <person name="Wilson P."/>
            <person name="Seemann T."/>
            <person name="McGrath A."/>
            <person name="Cullen P.A."/>
            <person name="Davis J."/>
            <person name="Johnson M."/>
            <person name="Kuczek E."/>
            <person name="Alt D.P."/>
            <person name="Peterson-Burch B."/>
            <person name="Coppel R.L."/>
            <person name="Rood J.I."/>
            <person name="Davies J.K."/>
            <person name="Adler B."/>
        </authorList>
    </citation>
    <scope>NUCLEOTIDE SEQUENCE [LARGE SCALE GENOMIC DNA]</scope>
    <source>
        <strain>JB197</strain>
    </source>
</reference>
<dbReference type="EC" id="7.4.2.8" evidence="1"/>
<dbReference type="EMBL" id="CP000350">
    <property type="protein sequence ID" value="ABJ76122.1"/>
    <property type="molecule type" value="Genomic_DNA"/>
</dbReference>
<dbReference type="SMR" id="Q04SJ8"/>
<dbReference type="KEGG" id="lbj:LBJ_1552"/>
<dbReference type="HOGENOM" id="CLU_005314_3_0_12"/>
<dbReference type="Proteomes" id="UP000000656">
    <property type="component" value="Chromosome 1"/>
</dbReference>
<dbReference type="GO" id="GO:0031522">
    <property type="term" value="C:cell envelope Sec protein transport complex"/>
    <property type="evidence" value="ECO:0007669"/>
    <property type="project" value="TreeGrafter"/>
</dbReference>
<dbReference type="GO" id="GO:0005829">
    <property type="term" value="C:cytosol"/>
    <property type="evidence" value="ECO:0007669"/>
    <property type="project" value="TreeGrafter"/>
</dbReference>
<dbReference type="GO" id="GO:0005886">
    <property type="term" value="C:plasma membrane"/>
    <property type="evidence" value="ECO:0007669"/>
    <property type="project" value="UniProtKB-SubCell"/>
</dbReference>
<dbReference type="GO" id="GO:0005524">
    <property type="term" value="F:ATP binding"/>
    <property type="evidence" value="ECO:0007669"/>
    <property type="project" value="UniProtKB-UniRule"/>
</dbReference>
<dbReference type="GO" id="GO:0008564">
    <property type="term" value="F:protein-exporting ATPase activity"/>
    <property type="evidence" value="ECO:0007669"/>
    <property type="project" value="UniProtKB-EC"/>
</dbReference>
<dbReference type="GO" id="GO:0065002">
    <property type="term" value="P:intracellular protein transmembrane transport"/>
    <property type="evidence" value="ECO:0007669"/>
    <property type="project" value="UniProtKB-UniRule"/>
</dbReference>
<dbReference type="GO" id="GO:0017038">
    <property type="term" value="P:protein import"/>
    <property type="evidence" value="ECO:0007669"/>
    <property type="project" value="InterPro"/>
</dbReference>
<dbReference type="GO" id="GO:0006605">
    <property type="term" value="P:protein targeting"/>
    <property type="evidence" value="ECO:0007669"/>
    <property type="project" value="UniProtKB-UniRule"/>
</dbReference>
<dbReference type="GO" id="GO:0043952">
    <property type="term" value="P:protein transport by the Sec complex"/>
    <property type="evidence" value="ECO:0007669"/>
    <property type="project" value="TreeGrafter"/>
</dbReference>
<dbReference type="CDD" id="cd17928">
    <property type="entry name" value="DEXDc_SecA"/>
    <property type="match status" value="1"/>
</dbReference>
<dbReference type="CDD" id="cd18803">
    <property type="entry name" value="SF2_C_secA"/>
    <property type="match status" value="1"/>
</dbReference>
<dbReference type="FunFam" id="1.10.3060.10:FF:000003">
    <property type="entry name" value="Protein translocase subunit SecA"/>
    <property type="match status" value="1"/>
</dbReference>
<dbReference type="FunFam" id="3.40.50.300:FF:000334">
    <property type="entry name" value="Protein translocase subunit SecA"/>
    <property type="match status" value="1"/>
</dbReference>
<dbReference type="FunFam" id="3.90.1440.10:FF:000002">
    <property type="entry name" value="Protein translocase subunit SecA"/>
    <property type="match status" value="1"/>
</dbReference>
<dbReference type="Gene3D" id="1.10.3060.10">
    <property type="entry name" value="Helical scaffold and wing domains of SecA"/>
    <property type="match status" value="1"/>
</dbReference>
<dbReference type="Gene3D" id="3.40.50.300">
    <property type="entry name" value="P-loop containing nucleotide triphosphate hydrolases"/>
    <property type="match status" value="2"/>
</dbReference>
<dbReference type="Gene3D" id="3.90.1440.10">
    <property type="entry name" value="SecA, preprotein cross-linking domain"/>
    <property type="match status" value="1"/>
</dbReference>
<dbReference type="HAMAP" id="MF_01382">
    <property type="entry name" value="SecA"/>
    <property type="match status" value="1"/>
</dbReference>
<dbReference type="InterPro" id="IPR014001">
    <property type="entry name" value="Helicase_ATP-bd"/>
</dbReference>
<dbReference type="InterPro" id="IPR027417">
    <property type="entry name" value="P-loop_NTPase"/>
</dbReference>
<dbReference type="InterPro" id="IPR000185">
    <property type="entry name" value="SecA"/>
</dbReference>
<dbReference type="InterPro" id="IPR020937">
    <property type="entry name" value="SecA_CS"/>
</dbReference>
<dbReference type="InterPro" id="IPR011115">
    <property type="entry name" value="SecA_DEAD"/>
</dbReference>
<dbReference type="InterPro" id="IPR014018">
    <property type="entry name" value="SecA_motor_DEAD"/>
</dbReference>
<dbReference type="InterPro" id="IPR011130">
    <property type="entry name" value="SecA_preprotein_X-link_dom"/>
</dbReference>
<dbReference type="InterPro" id="IPR044722">
    <property type="entry name" value="SecA_SF2_C"/>
</dbReference>
<dbReference type="InterPro" id="IPR011116">
    <property type="entry name" value="SecA_Wing/Scaffold"/>
</dbReference>
<dbReference type="InterPro" id="IPR036266">
    <property type="entry name" value="SecA_Wing/Scaffold_sf"/>
</dbReference>
<dbReference type="InterPro" id="IPR036670">
    <property type="entry name" value="SecA_X-link_sf"/>
</dbReference>
<dbReference type="NCBIfam" id="NF009538">
    <property type="entry name" value="PRK12904.1"/>
    <property type="match status" value="1"/>
</dbReference>
<dbReference type="NCBIfam" id="TIGR00963">
    <property type="entry name" value="secA"/>
    <property type="match status" value="1"/>
</dbReference>
<dbReference type="PANTHER" id="PTHR30612:SF0">
    <property type="entry name" value="CHLOROPLAST PROTEIN-TRANSPORTING ATPASE"/>
    <property type="match status" value="1"/>
</dbReference>
<dbReference type="PANTHER" id="PTHR30612">
    <property type="entry name" value="SECA INNER MEMBRANE COMPONENT OF SEC PROTEIN SECRETION SYSTEM"/>
    <property type="match status" value="1"/>
</dbReference>
<dbReference type="Pfam" id="PF21090">
    <property type="entry name" value="P-loop_SecA"/>
    <property type="match status" value="1"/>
</dbReference>
<dbReference type="Pfam" id="PF07517">
    <property type="entry name" value="SecA_DEAD"/>
    <property type="match status" value="1"/>
</dbReference>
<dbReference type="Pfam" id="PF01043">
    <property type="entry name" value="SecA_PP_bind"/>
    <property type="match status" value="1"/>
</dbReference>
<dbReference type="Pfam" id="PF07516">
    <property type="entry name" value="SecA_SW"/>
    <property type="match status" value="1"/>
</dbReference>
<dbReference type="PRINTS" id="PR00906">
    <property type="entry name" value="SECA"/>
</dbReference>
<dbReference type="SMART" id="SM00957">
    <property type="entry name" value="SecA_DEAD"/>
    <property type="match status" value="1"/>
</dbReference>
<dbReference type="SMART" id="SM00958">
    <property type="entry name" value="SecA_PP_bind"/>
    <property type="match status" value="1"/>
</dbReference>
<dbReference type="SUPFAM" id="SSF81886">
    <property type="entry name" value="Helical scaffold and wing domains of SecA"/>
    <property type="match status" value="1"/>
</dbReference>
<dbReference type="SUPFAM" id="SSF52540">
    <property type="entry name" value="P-loop containing nucleoside triphosphate hydrolases"/>
    <property type="match status" value="2"/>
</dbReference>
<dbReference type="SUPFAM" id="SSF81767">
    <property type="entry name" value="Pre-protein crosslinking domain of SecA"/>
    <property type="match status" value="1"/>
</dbReference>
<dbReference type="PROSITE" id="PS01312">
    <property type="entry name" value="SECA"/>
    <property type="match status" value="1"/>
</dbReference>
<dbReference type="PROSITE" id="PS51196">
    <property type="entry name" value="SECA_MOTOR_DEAD"/>
    <property type="match status" value="1"/>
</dbReference>
<comment type="function">
    <text evidence="1">Part of the Sec protein translocase complex. Interacts with the SecYEG preprotein conducting channel. Has a central role in coupling the hydrolysis of ATP to the transfer of proteins into and across the cell membrane, serving as an ATP-driven molecular motor driving the stepwise translocation of polypeptide chains across the membrane.</text>
</comment>
<comment type="catalytic activity">
    <reaction evidence="1">
        <text>ATP + H2O + cellular proteinSide 1 = ADP + phosphate + cellular proteinSide 2.</text>
        <dbReference type="EC" id="7.4.2.8"/>
    </reaction>
</comment>
<comment type="subunit">
    <text evidence="1">Monomer and homodimer. Part of the essential Sec protein translocation apparatus which comprises SecA, SecYEG and auxiliary proteins SecDF. Other proteins may also be involved.</text>
</comment>
<comment type="subcellular location">
    <subcellularLocation>
        <location evidence="1">Cell inner membrane</location>
        <topology evidence="1">Peripheral membrane protein</topology>
        <orientation evidence="1">Cytoplasmic side</orientation>
    </subcellularLocation>
    <subcellularLocation>
        <location evidence="1">Cytoplasm</location>
    </subcellularLocation>
    <text evidence="1">Distribution is 50-50.</text>
</comment>
<comment type="similarity">
    <text evidence="1">Belongs to the SecA family.</text>
</comment>
<keyword id="KW-0067">ATP-binding</keyword>
<keyword id="KW-0997">Cell inner membrane</keyword>
<keyword id="KW-1003">Cell membrane</keyword>
<keyword id="KW-0963">Cytoplasm</keyword>
<keyword id="KW-0472">Membrane</keyword>
<keyword id="KW-0547">Nucleotide-binding</keyword>
<keyword id="KW-0653">Protein transport</keyword>
<keyword id="KW-1278">Translocase</keyword>
<keyword id="KW-0811">Translocation</keyword>
<keyword id="KW-0813">Transport</keyword>